<sequence length="70" mass="8245">MPRELTEIKEFLLTARRKDAKSVKIKKNPENTKFKVRCSRFLYTLVITDREKAEKLKQSLPPGLQVKEVK</sequence>
<organism>
    <name type="scientific">Timarcha balearica</name>
    <dbReference type="NCBI Taxonomy" id="79517"/>
    <lineage>
        <taxon>Eukaryota</taxon>
        <taxon>Metazoa</taxon>
        <taxon>Ecdysozoa</taxon>
        <taxon>Arthropoda</taxon>
        <taxon>Hexapoda</taxon>
        <taxon>Insecta</taxon>
        <taxon>Pterygota</taxon>
        <taxon>Neoptera</taxon>
        <taxon>Endopterygota</taxon>
        <taxon>Coleoptera</taxon>
        <taxon>Polyphaga</taxon>
        <taxon>Cucujiformia</taxon>
        <taxon>Chrysomeloidea</taxon>
        <taxon>Chrysomelidae</taxon>
        <taxon>Chrysomelinae</taxon>
        <taxon>Timarchini</taxon>
        <taxon>Timarcha</taxon>
    </lineage>
</organism>
<comment type="similarity">
    <text evidence="1">Belongs to the eukaryotic ribosomal protein eL38 family.</text>
</comment>
<feature type="chain" id="PRO_0000319567" description="Large ribosomal subunit protein eL38">
    <location>
        <begin position="1"/>
        <end position="70"/>
    </location>
</feature>
<dbReference type="EMBL" id="AM049137">
    <property type="protein sequence ID" value="CAJ17437.1"/>
    <property type="molecule type" value="mRNA"/>
</dbReference>
<dbReference type="SMR" id="Q4GX86"/>
<dbReference type="GO" id="GO:0022625">
    <property type="term" value="C:cytosolic large ribosomal subunit"/>
    <property type="evidence" value="ECO:0007669"/>
    <property type="project" value="TreeGrafter"/>
</dbReference>
<dbReference type="GO" id="GO:0003735">
    <property type="term" value="F:structural constituent of ribosome"/>
    <property type="evidence" value="ECO:0007669"/>
    <property type="project" value="InterPro"/>
</dbReference>
<dbReference type="GO" id="GO:0022618">
    <property type="term" value="P:protein-RNA complex assembly"/>
    <property type="evidence" value="ECO:0007669"/>
    <property type="project" value="TreeGrafter"/>
</dbReference>
<dbReference type="GO" id="GO:0006412">
    <property type="term" value="P:translation"/>
    <property type="evidence" value="ECO:0007669"/>
    <property type="project" value="InterPro"/>
</dbReference>
<dbReference type="FunFam" id="3.30.720.90:FF:000001">
    <property type="entry name" value="60S ribosomal protein L38"/>
    <property type="match status" value="1"/>
</dbReference>
<dbReference type="Gene3D" id="3.30.720.90">
    <property type="match status" value="1"/>
</dbReference>
<dbReference type="InterPro" id="IPR002675">
    <property type="entry name" value="Ribosomal_eL38"/>
</dbReference>
<dbReference type="InterPro" id="IPR038464">
    <property type="entry name" value="Ribosomal_eL38_sf"/>
</dbReference>
<dbReference type="PANTHER" id="PTHR10965">
    <property type="entry name" value="60S RIBOSOMAL PROTEIN L38"/>
    <property type="match status" value="1"/>
</dbReference>
<dbReference type="PANTHER" id="PTHR10965:SF0">
    <property type="entry name" value="LARGE RIBOSOMAL SUBUNIT PROTEIN EL38"/>
    <property type="match status" value="1"/>
</dbReference>
<dbReference type="Pfam" id="PF01781">
    <property type="entry name" value="Ribosomal_L38e"/>
    <property type="match status" value="1"/>
</dbReference>
<protein>
    <recommendedName>
        <fullName evidence="1">Large ribosomal subunit protein eL38</fullName>
    </recommendedName>
    <alternativeName>
        <fullName>60S ribosomal protein L38</fullName>
    </alternativeName>
</protein>
<evidence type="ECO:0000305" key="1"/>
<name>RL38_TIMBA</name>
<keyword id="KW-0687">Ribonucleoprotein</keyword>
<keyword id="KW-0689">Ribosomal protein</keyword>
<gene>
    <name type="primary">RpL38</name>
</gene>
<reference key="1">
    <citation type="submission" date="2005-07" db="EMBL/GenBank/DDBJ databases">
        <title>Ribosomal proteins of Coleoptera.</title>
        <authorList>
            <person name="Longhorn S.J."/>
            <person name="Vogler A.P."/>
        </authorList>
    </citation>
    <scope>NUCLEOTIDE SEQUENCE [MRNA]</scope>
</reference>
<proteinExistence type="inferred from homology"/>
<accession>Q4GX86</accession>